<organism>
    <name type="scientific">Drosophila melanogaster</name>
    <name type="common">Fruit fly</name>
    <dbReference type="NCBI Taxonomy" id="7227"/>
    <lineage>
        <taxon>Eukaryota</taxon>
        <taxon>Metazoa</taxon>
        <taxon>Ecdysozoa</taxon>
        <taxon>Arthropoda</taxon>
        <taxon>Hexapoda</taxon>
        <taxon>Insecta</taxon>
        <taxon>Pterygota</taxon>
        <taxon>Neoptera</taxon>
        <taxon>Endopterygota</taxon>
        <taxon>Diptera</taxon>
        <taxon>Brachycera</taxon>
        <taxon>Muscomorpha</taxon>
        <taxon>Ephydroidea</taxon>
        <taxon>Drosophilidae</taxon>
        <taxon>Drosophila</taxon>
        <taxon>Sophophora</taxon>
    </lineage>
</organism>
<evidence type="ECO:0000250" key="1">
    <source>
        <dbReference type="UniProtKB" id="Q27IV2"/>
    </source>
</evidence>
<evidence type="ECO:0000255" key="2"/>
<evidence type="ECO:0000255" key="3">
    <source>
        <dbReference type="PROSITE-ProRule" id="PRU00638"/>
    </source>
</evidence>
<evidence type="ECO:0000256" key="4">
    <source>
        <dbReference type="SAM" id="MobiDB-lite"/>
    </source>
</evidence>
<evidence type="ECO:0000269" key="5">
    <source>
    </source>
</evidence>
<evidence type="ECO:0000269" key="6">
    <source>
    </source>
</evidence>
<evidence type="ECO:0000269" key="7">
    <source>
    </source>
</evidence>
<evidence type="ECO:0000269" key="8">
    <source>
    </source>
</evidence>
<evidence type="ECO:0000269" key="9">
    <source>
    </source>
</evidence>
<evidence type="ECO:0000303" key="10">
    <source>
    </source>
</evidence>
<evidence type="ECO:0000303" key="11">
    <source>
    </source>
</evidence>
<evidence type="ECO:0000303" key="12">
    <source>
    </source>
</evidence>
<evidence type="ECO:0000305" key="13"/>
<evidence type="ECO:0000312" key="14">
    <source>
        <dbReference type="FlyBase" id="FBgn0085408"/>
    </source>
</evidence>
<evidence type="ECO:0007744" key="15">
    <source>
        <dbReference type="PDB" id="3THF"/>
    </source>
</evidence>
<evidence type="ECO:0007829" key="16">
    <source>
        <dbReference type="PDB" id="3THF"/>
    </source>
</evidence>
<proteinExistence type="evidence at protein level"/>
<feature type="chain" id="PRO_0000286069" description="Protein Shroom">
    <location>
        <begin position="1"/>
        <end position="1576"/>
    </location>
</feature>
<feature type="domain" description="ASD2" evidence="3">
    <location>
        <begin position="1305"/>
        <end position="1572"/>
    </location>
</feature>
<feature type="region of interest" description="Disordered" evidence="4">
    <location>
        <begin position="1"/>
        <end position="31"/>
    </location>
</feature>
<feature type="region of interest" description="Disordered" evidence="4">
    <location>
        <begin position="46"/>
        <end position="100"/>
    </location>
</feature>
<feature type="region of interest" description="Disordered" evidence="4">
    <location>
        <begin position="112"/>
        <end position="142"/>
    </location>
</feature>
<feature type="region of interest" description="Disordered" evidence="4">
    <location>
        <begin position="187"/>
        <end position="244"/>
    </location>
</feature>
<feature type="region of interest" description="Disordered" evidence="4">
    <location>
        <begin position="267"/>
        <end position="434"/>
    </location>
</feature>
<feature type="region of interest" description="F-actin binding region required for planar polarity and cortical localization" evidence="7 9">
    <location>
        <begin position="445"/>
        <end position="920"/>
    </location>
</feature>
<feature type="region of interest" description="Disordered" evidence="4">
    <location>
        <begin position="589"/>
        <end position="609"/>
    </location>
</feature>
<feature type="region of interest" description="Disordered" evidence="4">
    <location>
        <begin position="621"/>
        <end position="660"/>
    </location>
</feature>
<feature type="region of interest" description="Disordered" evidence="4">
    <location>
        <begin position="699"/>
        <end position="728"/>
    </location>
</feature>
<feature type="region of interest" description="Disordered" evidence="4">
    <location>
        <begin position="743"/>
        <end position="823"/>
    </location>
</feature>
<feature type="region of interest" description="Disordered" evidence="4">
    <location>
        <begin position="849"/>
        <end position="876"/>
    </location>
</feature>
<feature type="region of interest" description="Disordered" evidence="4">
    <location>
        <begin position="910"/>
        <end position="939"/>
    </location>
</feature>
<feature type="region of interest" description="Disordered" evidence="4">
    <location>
        <begin position="1036"/>
        <end position="1055"/>
    </location>
</feature>
<feature type="region of interest" description="Disordered" evidence="4">
    <location>
        <begin position="1091"/>
        <end position="1116"/>
    </location>
</feature>
<feature type="region of interest" description="Disordered" evidence="4">
    <location>
        <begin position="1210"/>
        <end position="1244"/>
    </location>
</feature>
<feature type="coiled-coil region" evidence="2">
    <location>
        <begin position="1232"/>
        <end position="1296"/>
    </location>
</feature>
<feature type="compositionally biased region" description="Polar residues" evidence="4">
    <location>
        <begin position="10"/>
        <end position="21"/>
    </location>
</feature>
<feature type="compositionally biased region" description="Low complexity" evidence="4">
    <location>
        <begin position="46"/>
        <end position="69"/>
    </location>
</feature>
<feature type="compositionally biased region" description="Low complexity" evidence="4">
    <location>
        <begin position="76"/>
        <end position="91"/>
    </location>
</feature>
<feature type="compositionally biased region" description="Low complexity" evidence="4">
    <location>
        <begin position="128"/>
        <end position="142"/>
    </location>
</feature>
<feature type="compositionally biased region" description="Basic residues" evidence="4">
    <location>
        <begin position="189"/>
        <end position="211"/>
    </location>
</feature>
<feature type="compositionally biased region" description="Low complexity" evidence="4">
    <location>
        <begin position="212"/>
        <end position="244"/>
    </location>
</feature>
<feature type="compositionally biased region" description="Low complexity" evidence="4">
    <location>
        <begin position="267"/>
        <end position="283"/>
    </location>
</feature>
<feature type="compositionally biased region" description="Polar residues" evidence="4">
    <location>
        <begin position="305"/>
        <end position="317"/>
    </location>
</feature>
<feature type="compositionally biased region" description="Low complexity" evidence="4">
    <location>
        <begin position="376"/>
        <end position="388"/>
    </location>
</feature>
<feature type="compositionally biased region" description="Polar residues" evidence="4">
    <location>
        <begin position="399"/>
        <end position="415"/>
    </location>
</feature>
<feature type="compositionally biased region" description="Polar residues" evidence="4">
    <location>
        <begin position="633"/>
        <end position="643"/>
    </location>
</feature>
<feature type="compositionally biased region" description="Basic residues" evidence="4">
    <location>
        <begin position="748"/>
        <end position="759"/>
    </location>
</feature>
<feature type="compositionally biased region" description="Pro residues" evidence="4">
    <location>
        <begin position="798"/>
        <end position="816"/>
    </location>
</feature>
<feature type="compositionally biased region" description="Polar residues" evidence="4">
    <location>
        <begin position="910"/>
        <end position="923"/>
    </location>
</feature>
<feature type="compositionally biased region" description="Polar residues" evidence="4">
    <location>
        <begin position="1042"/>
        <end position="1055"/>
    </location>
</feature>
<feature type="compositionally biased region" description="Pro residues" evidence="4">
    <location>
        <begin position="1094"/>
        <end position="1108"/>
    </location>
</feature>
<feature type="compositionally biased region" description="Pro residues" evidence="4">
    <location>
        <begin position="1217"/>
        <end position="1229"/>
    </location>
</feature>
<feature type="compositionally biased region" description="Acidic residues" evidence="4">
    <location>
        <begin position="1230"/>
        <end position="1239"/>
    </location>
</feature>
<feature type="modified residue" description="Phosphoserine" evidence="6">
    <location>
        <position position="404"/>
    </location>
</feature>
<feature type="modified residue" description="Phosphoserine" evidence="6">
    <location>
        <position position="667"/>
    </location>
</feature>
<feature type="modified residue" description="Phosphoserine" evidence="6">
    <location>
        <position position="668"/>
    </location>
</feature>
<feature type="splice variant" id="VSP_024971" description="In isoform F." evidence="10">
    <original>KMRNHKENG</original>
    <variation>AQWFQWLNF</variation>
    <location>
        <begin position="2"/>
        <end position="10"/>
    </location>
</feature>
<feature type="splice variant" id="VSP_036999" description="In isoform G." evidence="13">
    <original>KMRNHKENG</original>
    <variation>VFGGKFRIR</variation>
    <location>
        <begin position="2"/>
        <end position="10"/>
    </location>
</feature>
<feature type="splice variant" id="VSP_037000" description="In isoform F and isoform G." evidence="10">
    <location>
        <begin position="11"/>
        <end position="917"/>
    </location>
</feature>
<feature type="mutagenesis site" description="Does not affect dimerization or binding to Rok.">
    <original>KMDEL</original>
    <variation>AMDRA</variation>
    <location>
        <begin position="1402"/>
        <end position="1406"/>
    </location>
</feature>
<feature type="mutagenesis site" description="Loss of dimerization and binding to Rok." evidence="8">
    <original>LLSL</original>
    <variation>AASA</variation>
    <location>
        <begin position="1468"/>
        <end position="1471"/>
    </location>
</feature>
<feature type="mutagenesis site" description="Reduces binding to Rok." evidence="8">
    <original>SLSERLA</original>
    <variation>ALEEDLE</variation>
    <location>
        <begin position="1470"/>
        <end position="1476"/>
    </location>
</feature>
<feature type="mutagenesis site" description="Loss of binding to Rok." evidence="8">
    <original>LKSDIERR</original>
    <variation>AASDIEDA</variation>
    <location>
        <begin position="1509"/>
        <end position="1516"/>
    </location>
</feature>
<feature type="mutagenesis site" description="Loss of dimerization and binding to Rok." evidence="8">
    <original>LIADARDL</original>
    <variation>AAADARDA</variation>
    <location>
        <begin position="1546"/>
        <end position="1553"/>
    </location>
</feature>
<feature type="helix" evidence="16">
    <location>
        <begin position="1398"/>
        <end position="1445"/>
    </location>
</feature>
<feature type="helix" evidence="16">
    <location>
        <begin position="1448"/>
        <end position="1527"/>
    </location>
</feature>
<feature type="helix" evidence="16">
    <location>
        <begin position="1530"/>
        <end position="1567"/>
    </location>
</feature>
<protein>
    <recommendedName>
        <fullName evidence="11 14">Protein Shroom</fullName>
    </recommendedName>
</protein>
<reference key="1">
    <citation type="journal article" date="2000" name="Science">
        <title>The genome sequence of Drosophila melanogaster.</title>
        <authorList>
            <person name="Adams M.D."/>
            <person name="Celniker S.E."/>
            <person name="Holt R.A."/>
            <person name="Evans C.A."/>
            <person name="Gocayne J.D."/>
            <person name="Amanatides P.G."/>
            <person name="Scherer S.E."/>
            <person name="Li P.W."/>
            <person name="Hoskins R.A."/>
            <person name="Galle R.F."/>
            <person name="George R.A."/>
            <person name="Lewis S.E."/>
            <person name="Richards S."/>
            <person name="Ashburner M."/>
            <person name="Henderson S.N."/>
            <person name="Sutton G.G."/>
            <person name="Wortman J.R."/>
            <person name="Yandell M.D."/>
            <person name="Zhang Q."/>
            <person name="Chen L.X."/>
            <person name="Brandon R.C."/>
            <person name="Rogers Y.-H.C."/>
            <person name="Blazej R.G."/>
            <person name="Champe M."/>
            <person name="Pfeiffer B.D."/>
            <person name="Wan K.H."/>
            <person name="Doyle C."/>
            <person name="Baxter E.G."/>
            <person name="Helt G."/>
            <person name="Nelson C.R."/>
            <person name="Miklos G.L.G."/>
            <person name="Abril J.F."/>
            <person name="Agbayani A."/>
            <person name="An H.-J."/>
            <person name="Andrews-Pfannkoch C."/>
            <person name="Baldwin D."/>
            <person name="Ballew R.M."/>
            <person name="Basu A."/>
            <person name="Baxendale J."/>
            <person name="Bayraktaroglu L."/>
            <person name="Beasley E.M."/>
            <person name="Beeson K.Y."/>
            <person name="Benos P.V."/>
            <person name="Berman B.P."/>
            <person name="Bhandari D."/>
            <person name="Bolshakov S."/>
            <person name="Borkova D."/>
            <person name="Botchan M.R."/>
            <person name="Bouck J."/>
            <person name="Brokstein P."/>
            <person name="Brottier P."/>
            <person name="Burtis K.C."/>
            <person name="Busam D.A."/>
            <person name="Butler H."/>
            <person name="Cadieu E."/>
            <person name="Center A."/>
            <person name="Chandra I."/>
            <person name="Cherry J.M."/>
            <person name="Cawley S."/>
            <person name="Dahlke C."/>
            <person name="Davenport L.B."/>
            <person name="Davies P."/>
            <person name="de Pablos B."/>
            <person name="Delcher A."/>
            <person name="Deng Z."/>
            <person name="Mays A.D."/>
            <person name="Dew I."/>
            <person name="Dietz S.M."/>
            <person name="Dodson K."/>
            <person name="Doup L.E."/>
            <person name="Downes M."/>
            <person name="Dugan-Rocha S."/>
            <person name="Dunkov B.C."/>
            <person name="Dunn P."/>
            <person name="Durbin K.J."/>
            <person name="Evangelista C.C."/>
            <person name="Ferraz C."/>
            <person name="Ferriera S."/>
            <person name="Fleischmann W."/>
            <person name="Fosler C."/>
            <person name="Gabrielian A.E."/>
            <person name="Garg N.S."/>
            <person name="Gelbart W.M."/>
            <person name="Glasser K."/>
            <person name="Glodek A."/>
            <person name="Gong F."/>
            <person name="Gorrell J.H."/>
            <person name="Gu Z."/>
            <person name="Guan P."/>
            <person name="Harris M."/>
            <person name="Harris N.L."/>
            <person name="Harvey D.A."/>
            <person name="Heiman T.J."/>
            <person name="Hernandez J.R."/>
            <person name="Houck J."/>
            <person name="Hostin D."/>
            <person name="Houston K.A."/>
            <person name="Howland T.J."/>
            <person name="Wei M.-H."/>
            <person name="Ibegwam C."/>
            <person name="Jalali M."/>
            <person name="Kalush F."/>
            <person name="Karpen G.H."/>
            <person name="Ke Z."/>
            <person name="Kennison J.A."/>
            <person name="Ketchum K.A."/>
            <person name="Kimmel B.E."/>
            <person name="Kodira C.D."/>
            <person name="Kraft C.L."/>
            <person name="Kravitz S."/>
            <person name="Kulp D."/>
            <person name="Lai Z."/>
            <person name="Lasko P."/>
            <person name="Lei Y."/>
            <person name="Levitsky A.A."/>
            <person name="Li J.H."/>
            <person name="Li Z."/>
            <person name="Liang Y."/>
            <person name="Lin X."/>
            <person name="Liu X."/>
            <person name="Mattei B."/>
            <person name="McIntosh T.C."/>
            <person name="McLeod M.P."/>
            <person name="McPherson D."/>
            <person name="Merkulov G."/>
            <person name="Milshina N.V."/>
            <person name="Mobarry C."/>
            <person name="Morris J."/>
            <person name="Moshrefi A."/>
            <person name="Mount S.M."/>
            <person name="Moy M."/>
            <person name="Murphy B."/>
            <person name="Murphy L."/>
            <person name="Muzny D.M."/>
            <person name="Nelson D.L."/>
            <person name="Nelson D.R."/>
            <person name="Nelson K.A."/>
            <person name="Nixon K."/>
            <person name="Nusskern D.R."/>
            <person name="Pacleb J.M."/>
            <person name="Palazzolo M."/>
            <person name="Pittman G.S."/>
            <person name="Pan S."/>
            <person name="Pollard J."/>
            <person name="Puri V."/>
            <person name="Reese M.G."/>
            <person name="Reinert K."/>
            <person name="Remington K."/>
            <person name="Saunders R.D.C."/>
            <person name="Scheeler F."/>
            <person name="Shen H."/>
            <person name="Shue B.C."/>
            <person name="Siden-Kiamos I."/>
            <person name="Simpson M."/>
            <person name="Skupski M.P."/>
            <person name="Smith T.J."/>
            <person name="Spier E."/>
            <person name="Spradling A.C."/>
            <person name="Stapleton M."/>
            <person name="Strong R."/>
            <person name="Sun E."/>
            <person name="Svirskas R."/>
            <person name="Tector C."/>
            <person name="Turner R."/>
            <person name="Venter E."/>
            <person name="Wang A.H."/>
            <person name="Wang X."/>
            <person name="Wang Z.-Y."/>
            <person name="Wassarman D.A."/>
            <person name="Weinstock G.M."/>
            <person name="Weissenbach J."/>
            <person name="Williams S.M."/>
            <person name="Woodage T."/>
            <person name="Worley K.C."/>
            <person name="Wu D."/>
            <person name="Yang S."/>
            <person name="Yao Q.A."/>
            <person name="Ye J."/>
            <person name="Yeh R.-F."/>
            <person name="Zaveri J.S."/>
            <person name="Zhan M."/>
            <person name="Zhang G."/>
            <person name="Zhao Q."/>
            <person name="Zheng L."/>
            <person name="Zheng X.H."/>
            <person name="Zhong F.N."/>
            <person name="Zhong W."/>
            <person name="Zhou X."/>
            <person name="Zhu S.C."/>
            <person name="Zhu X."/>
            <person name="Smith H.O."/>
            <person name="Gibbs R.A."/>
            <person name="Myers E.W."/>
            <person name="Rubin G.M."/>
            <person name="Venter J.C."/>
        </authorList>
    </citation>
    <scope>NUCLEOTIDE SEQUENCE [LARGE SCALE GENOMIC DNA]</scope>
    <source>
        <strain>Berkeley</strain>
    </source>
</reference>
<reference key="2">
    <citation type="journal article" date="2002" name="Genome Biol.">
        <title>Annotation of the Drosophila melanogaster euchromatic genome: a systematic review.</title>
        <authorList>
            <person name="Misra S."/>
            <person name="Crosby M.A."/>
            <person name="Mungall C.J."/>
            <person name="Matthews B.B."/>
            <person name="Campbell K.S."/>
            <person name="Hradecky P."/>
            <person name="Huang Y."/>
            <person name="Kaminker J.S."/>
            <person name="Millburn G.H."/>
            <person name="Prochnik S.E."/>
            <person name="Smith C.D."/>
            <person name="Tupy J.L."/>
            <person name="Whitfield E.J."/>
            <person name="Bayraktaroglu L."/>
            <person name="Berman B.P."/>
            <person name="Bettencourt B.R."/>
            <person name="Celniker S.E."/>
            <person name="de Grey A.D.N.J."/>
            <person name="Drysdale R.A."/>
            <person name="Harris N.L."/>
            <person name="Richter J."/>
            <person name="Russo S."/>
            <person name="Schroeder A.J."/>
            <person name="Shu S.Q."/>
            <person name="Stapleton M."/>
            <person name="Yamada C."/>
            <person name="Ashburner M."/>
            <person name="Gelbart W.M."/>
            <person name="Rubin G.M."/>
            <person name="Lewis S.E."/>
        </authorList>
    </citation>
    <scope>GENOME REANNOTATION</scope>
    <scope>ALTERNATIVE SPLICING</scope>
    <source>
        <strain>Berkeley</strain>
    </source>
</reference>
<reference key="3">
    <citation type="journal article" date="2002" name="Genome Biol.">
        <title>A Drosophila full-length cDNA resource.</title>
        <authorList>
            <person name="Stapleton M."/>
            <person name="Carlson J.W."/>
            <person name="Brokstein P."/>
            <person name="Yu C."/>
            <person name="Champe M."/>
            <person name="George R.A."/>
            <person name="Guarin H."/>
            <person name="Kronmiller B."/>
            <person name="Pacleb J.M."/>
            <person name="Park S."/>
            <person name="Wan K.H."/>
            <person name="Rubin G.M."/>
            <person name="Celniker S.E."/>
        </authorList>
    </citation>
    <scope>NUCLEOTIDE SEQUENCE [LARGE SCALE MRNA] (ISOFORM F)</scope>
    <source>
        <strain>Berkeley</strain>
        <tissue>Head</tissue>
    </source>
</reference>
<reference key="4">
    <citation type="submission" date="2005-10" db="EMBL/GenBank/DDBJ databases">
        <authorList>
            <person name="Stapleton M."/>
            <person name="Carlson J.W."/>
            <person name="Chavez C."/>
            <person name="Frise E."/>
            <person name="George R.A."/>
            <person name="Pacleb J.M."/>
            <person name="Park S."/>
            <person name="Wan K.H."/>
            <person name="Yu C."/>
            <person name="Celniker S.E."/>
        </authorList>
    </citation>
    <scope>NUCLEOTIDE SEQUENCE [LARGE SCALE MRNA] (ISOFORM D)</scope>
    <source>
        <strain>Berkeley</strain>
        <tissue>Larva</tissue>
        <tissue>Pupae</tissue>
    </source>
</reference>
<reference key="5">
    <citation type="journal article" date="2006" name="BMC Cell Biol.">
        <title>A new standard nomenclature for proteins related to Apx and Shroom.</title>
        <authorList>
            <person name="Hagens O."/>
            <person name="Ballabio A."/>
            <person name="Kalscheuer V."/>
            <person name="Kraehenbuhl J.-P."/>
            <person name="Schiaffino M.V."/>
            <person name="Smith P."/>
            <person name="Staub O."/>
            <person name="Hildebrand J.D."/>
            <person name="Wallingford J.B."/>
        </authorList>
    </citation>
    <scope>NOMENCLATURE</scope>
</reference>
<reference key="6">
    <citation type="journal article" date="2006" name="J. Biol. Chem.">
        <title>Differential actin-dependent localization modulates the evolutionarily conserved activity of Shroom family proteins.</title>
        <authorList>
            <person name="Dietz M.L."/>
            <person name="Bernaciak T.M."/>
            <person name="Vendetti F."/>
            <person name="Kielec J.M."/>
            <person name="Hildebrand J.D."/>
        </authorList>
    </citation>
    <scope>SUBCELLULAR LOCATION</scope>
</reference>
<reference key="7">
    <citation type="journal article" date="2008" name="J. Proteome Res.">
        <title>Phosphoproteome analysis of Drosophila melanogaster embryos.</title>
        <authorList>
            <person name="Zhai B."/>
            <person name="Villen J."/>
            <person name="Beausoleil S.A."/>
            <person name="Mintseris J."/>
            <person name="Gygi S.P."/>
        </authorList>
    </citation>
    <scope>PHOSPHORYLATION [LARGE SCALE ANALYSIS] AT SER-404; SER-667 AND SER-668</scope>
    <scope>IDENTIFICATION BY MASS SPECTROMETRY</scope>
    <source>
        <tissue>Embryo</tissue>
    </source>
</reference>
<reference key="8">
    <citation type="journal article" date="2010" name="Dev. Dyn.">
        <title>Specific isoforms of drosophila shroom define spatial requirements for the induction of apical constriction.</title>
        <authorList>
            <person name="Bolinger C."/>
            <person name="Zasadil L."/>
            <person name="Rizaldy R."/>
            <person name="Hildebrand J.D."/>
        </authorList>
    </citation>
    <scope>FUNCTION</scope>
    <scope>INTERACTION WITH F-ACTIN (ISOFORM D)</scope>
    <scope>SUBCELLULAR LOCATION (ISOFORMS D AND F)</scope>
    <scope>DEVELOPMENTAL STAGE</scope>
    <scope>DOMAIN</scope>
</reference>
<reference key="9">
    <citation type="journal article" date="2014" name="J. Cell Biol.">
        <title>Rho GTPase and Shroom direct planar polarized actomyosin contractility during convergent extension.</title>
        <authorList>
            <person name="Simoes S."/>
            <person name="Mainieri A."/>
            <person name="Zallen J.A."/>
        </authorList>
    </citation>
    <scope>FUNCTION</scope>
    <scope>SUBCELLULAR LOCATION (ISOFORM D)</scope>
    <scope>DEVELOPMENTAL STAGE (ISOFORM D)</scope>
    <scope>DISRUPTION PHENOTYPE (ISOFORM D)</scope>
</reference>
<reference evidence="15" key="10">
    <citation type="journal article" date="2012" name="Mol. Biol. Cell">
        <title>Structure of Shroom domain 2 reveals a three-segmented coiled-coil required for dimerization, Rock binding, and apical constriction.</title>
        <authorList>
            <person name="Mohan S."/>
            <person name="Rizaldy R."/>
            <person name="Das D."/>
            <person name="Bauer R.J."/>
            <person name="Heroux A."/>
            <person name="Trakselis M.A."/>
            <person name="Hildebrand J.D."/>
            <person name="VanDemark A.P."/>
        </authorList>
    </citation>
    <scope>X-RAY CRYSTALLOGRAPHY (2.70 ANGSTROMS) OF 1393-1576</scope>
    <scope>FUNCTION</scope>
    <scope>SUBUNIT</scope>
    <scope>INTERACTION WITH ROK</scope>
    <scope>SUBCELLULAR LOCATION (ISOFORM D)</scope>
    <scope>DOMAIN</scope>
    <scope>MUTAGENESIS OF 1402-LYS--LEU-1406; 1468-LEU--LEU-1471; 1470-SER--ALA-1476; 1509-LEU--ARG-1516 AND 1546-LEU--LEU-1553</scope>
</reference>
<gene>
    <name evidence="11 14" type="primary">Shrm</name>
    <name evidence="14" type="synonym">Shroom</name>
    <name evidence="14" type="ORF">CG34379</name>
</gene>
<comment type="function">
    <text evidence="1 7 8 9">Binds to Rho-kinase Rok and targets it to the apical cell cortex where it mediates apical constriction (PubMed:20549743, PubMed:22493320). During embryogenic axis elongation, required for the localization to adherens junctions and the establishment of planar polarization of both Rho-kinase Rok and myosin regulatory light chain sqh (PubMed:24535826). May be involved in the assembly of microtubule arrays during cell elongation (By similarity).</text>
</comment>
<comment type="subunit">
    <text evidence="8">Monomer or homodimer (PubMed:22493320). Interacts with Rok (PubMed:22493320).</text>
</comment>
<comment type="subunit">
    <molecule>Isoform D</molecule>
    <text evidence="7">Binds (via N-terminus) to F-actin (PubMed:20549743).</text>
</comment>
<comment type="subcellular location">
    <molecule>Isoform D</molecule>
    <subcellularLocation>
        <location evidence="7 8 9">Cell junction</location>
        <location evidence="7 8 9">Adherens junction</location>
    </subcellularLocation>
    <subcellularLocation>
        <location evidence="5 7">Cytoplasm</location>
        <location evidence="5 7">Cytoskeleton</location>
    </subcellularLocation>
    <text evidence="7 8 9">In adherens junctions, enriched in discrete spots and in tricellular junctions (PubMed:20549743, PubMed:22493320). In adherens junctions, localization requires Rho1 GTPase activity and interaction with the F-actin cytoskeleton (PubMed:20549743, PubMed:24535826).</text>
</comment>
<comment type="subcellular location">
    <molecule>Isoform F</molecule>
    <subcellularLocation>
        <location evidence="7">Apical cell membrane</location>
        <topology>Peripheral membrane protein</topology>
    </subcellularLocation>
    <text evidence="7">Localization to the apical cell membrane depends on N-terminal region (PubMed:20549743). Excluded from the lateral membrane (PubMed:20549743).</text>
</comment>
<comment type="alternative products">
    <event type="alternative splicing"/>
    <isoform>
        <id>A1Z9P3-3</id>
        <name evidence="14">D</name>
        <name evidence="11 12">dShrmA</name>
        <sequence type="displayed"/>
    </isoform>
    <isoform>
        <id>A1Z9P3-2</id>
        <name evidence="14">F</name>
        <name evidence="11">dShrmB</name>
        <sequence type="described" ref="VSP_024971 VSP_037000"/>
    </isoform>
    <isoform>
        <id>A1Z9P3-1</id>
        <name evidence="14">G</name>
        <name evidence="11">dShrmC</name>
        <sequence type="described" ref="VSP_036999 VSP_037000"/>
    </isoform>
</comment>
<comment type="developmental stage">
    <text evidence="7 9">Expressed in the embryo (at protein level) (PubMed:20549743). Expressed in the dorsal trunk of the trachea (at protein level) (PubMed:20549743). Isoform D: Expressed in the invaginating foregut (at protein level) (PubMed:20549743). Planar polarized during axis elongation from stage 7 (at protein level) (PubMed:24535826).</text>
</comment>
<comment type="domain">
    <text evidence="7 8">The ASD2 domain mediates the interaction with Rok and is required for apical constriction induction.</text>
</comment>
<comment type="disruption phenotype">
    <text evidence="9">During axis elongation in the embryo decreases localization to adherens junctions and planar polarization for both Rho-kinase Rok and myosin regulatory light chain sqh (PubMed:24535826). The mislocalization of sqh impairs the generation of sustained actomyosin contractility during cell rearrangement and can account for the reduction in the formation of multicellular rosette and convergent extension (PubMed:24535826). RNAi-mediated knockdown in the embryo decreases Rho-kinase Rok localization to adherens junctions and planar polarization during axis elongation (PubMed:24535826). Has no effect on Rho1 localization or activity (PubMed:24535826). Isoform D: RNAi-mediated knockdown in the embryo, ecreases localization to adherens junctions and planar polarization for both Rho-kinase Rok and myosin regulatory light chain sqh (PubMed:24535826).</text>
</comment>
<comment type="similarity">
    <text evidence="13">Belongs to the shroom family.</text>
</comment>
<name>SHRM_DROME</name>
<accession>A1Z9P3</accession>
<accession>A1Z9P2</accession>
<accession>Q3KN39</accession>
<accession>Q7K1B1</accession>
<sequence>MKMRNHKENGNGSEMGESTKSLAKMEPENNNKISVVSVSKLLLKDSNGANSRSSNSNASFSSASVAGSVQDDLPHHNSSSSQLGQQHGSSLDQCGLTQAGLEEYNNRSSSYYDQTAFHHQKQPSYAQSEGYHSYVSSSDSTSATPFLDKLRQESDLLSRQSHHWSENDLSSVCSNSVAPSPIPLLARQSHSHSHSHAHSHSNSHGHSHGHAHSASSSSSSNNNSNGSATNNNNNNSSESTSSTETLKWLGSMSDISEASHATGYSAISESVSSSQRIVHSSRVPTPKRHHSESVLYLHNNEEQGDSSPTASNSSQMMISEEANGEESPPSVQPLRIQHRHSPSYPPVHTSMVLHHFQQQQQQQQDYQHPSRHHTNQSTLSTQSSLLELASPTEKPRSLMGQSHSMGDLQQKNPHQNPMLGRSAGQQHKSSISVTISSSEAVVTIAPQPPAGKPSKLQLSLGKSEALSCSTPNMGEQSPTNSIDSYRSNHRLFPVSTYTEPVHSNTSQYVQHPKPQFSSGLHKSAKLPVITPAGATVQPTWHSVAERINDFERSQLGEPPKFAYLEPTKTHRLSNPALKALQKNAVQSYVERQQQQQKEEQQLLRPHSQSYQACHVERKSLPNNLSPIMVGLPTGSNSASTRDCSSPTPPPPPRRSGSLLPNLLRRSSSASDYAEFRELHQAQGQVKGPSIRNISNAEKISFNDCGMPPPPPPPRGRLAVPTRRTSSATEYAPMRDKLLLQQAAALAHQQHHPQQHRHAQPPHVPPERPPKHPNLRVPSPELPPPPQSELDISYTFDEPLPPPPPPEVLQPRPPPSPNRRNCFAGASTRRTTYEAPPPTAIVAAKVPPLVPKKPTSLQHKHLANGGGGSRKRPHHATPQPILENVASPVAPPPPLLPRARSTAHDNVIASNLESNQQKRSNSKASYLPRQSLEKLNNTDPDHGIYKLTLTSNEDLVAHTKPSYGVTGKLPNNLPDVLPLGVKLHQQPKLQPGSPNGDANVTLRYGSNNNLTGNSPTVAPPPYYGGGQRYSTPVLGQGYGKSSKPVTPQQYTRSQSYDVKHTSAVTMPTMSQSHVDLKQAAHDLETTLEEVLPTATPTPTPTPTPTPPRLSPASSHSDCSLSTSSLECTINPIATPIPKPEAHIFRAEVISTTLNTNPLTTPPKPAMNRQESLRENIEKITQLQSVLMSAHLCDASLLGGYTTPLITSPTASFANEPLMTPPLPPSPPPPLEPEEEEEQEENDVHDKQPEIEELQLMQRSELVLMVNPKPSTTDMACQTDELEDRDTDLEAAREEHQTRTTLQPRQRQPIELDYEQMSRELVKLLPPGDKIADILTPKICKPTSQYVSNLYNPDVPLRLAKRDVGTSTLMRMKSITSSAEIRVVSVELQLAEPSEEPTNLIKQKMDELIKHLNQKIVSLKREQQTISEECSANDRLGQDLFAKLAEKVRPSEASKFRTHVDAVGNITSLLLSLSERLAQTESSLETRQQERGALESKRDLLYEQMEEAQRLKSDIERRGVSIAGLLAKNLSADMCADYDYFINMKAKLIADARDLAVRIKGSEEQLSSLSDALVQSDC</sequence>
<keyword id="KW-0002">3D-structure</keyword>
<keyword id="KW-0025">Alternative splicing</keyword>
<keyword id="KW-0965">Cell junction</keyword>
<keyword id="KW-1003">Cell membrane</keyword>
<keyword id="KW-0175">Coiled coil</keyword>
<keyword id="KW-0963">Cytoplasm</keyword>
<keyword id="KW-0206">Cytoskeleton</keyword>
<keyword id="KW-0217">Developmental protein</keyword>
<keyword id="KW-0472">Membrane</keyword>
<keyword id="KW-0493">Microtubule</keyword>
<keyword id="KW-0597">Phosphoprotein</keyword>
<keyword id="KW-1185">Reference proteome</keyword>
<dbReference type="EMBL" id="AE013599">
    <property type="protein sequence ID" value="AAF58259.2"/>
    <property type="molecule type" value="Genomic_DNA"/>
</dbReference>
<dbReference type="EMBL" id="AE013599">
    <property type="protein sequence ID" value="AAM70999.2"/>
    <property type="molecule type" value="Genomic_DNA"/>
</dbReference>
<dbReference type="EMBL" id="AE013599">
    <property type="protein sequence ID" value="AAF58260.2"/>
    <property type="molecule type" value="Genomic_DNA"/>
</dbReference>
<dbReference type="EMBL" id="AY069213">
    <property type="protein sequence ID" value="AAL39358.1"/>
    <property type="molecule type" value="mRNA"/>
</dbReference>
<dbReference type="EMBL" id="BT023900">
    <property type="protein sequence ID" value="ABA81834.1"/>
    <property type="molecule type" value="mRNA"/>
</dbReference>
<dbReference type="RefSeq" id="NP_001097307.1">
    <molecule id="A1Z9P3-3"/>
    <property type="nucleotide sequence ID" value="NM_001103837.2"/>
</dbReference>
<dbReference type="RefSeq" id="NP_001286417.1">
    <molecule id="A1Z9P3-3"/>
    <property type="nucleotide sequence ID" value="NM_001299488.1"/>
</dbReference>
<dbReference type="RefSeq" id="NP_610952.1">
    <molecule id="A1Z9P3-2"/>
    <property type="nucleotide sequence ID" value="NM_137108.3"/>
</dbReference>
<dbReference type="RefSeq" id="NP_725378.2">
    <molecule id="A1Z9P3-1"/>
    <property type="nucleotide sequence ID" value="NM_166047.2"/>
</dbReference>
<dbReference type="PDB" id="3THF">
    <property type="method" value="X-ray"/>
    <property type="resolution" value="2.70 A"/>
    <property type="chains" value="A/B=1393-1576"/>
</dbReference>
<dbReference type="PDBsum" id="3THF"/>
<dbReference type="SMR" id="A1Z9P3"/>
<dbReference type="BioGRID" id="62342">
    <property type="interactions" value="13"/>
</dbReference>
<dbReference type="FunCoup" id="A1Z9P3">
    <property type="interactions" value="6"/>
</dbReference>
<dbReference type="IntAct" id="A1Z9P3">
    <property type="interactions" value="1"/>
</dbReference>
<dbReference type="STRING" id="7227.FBpp0309010"/>
<dbReference type="GlyGen" id="A1Z9P3">
    <property type="glycosylation" value="6 sites"/>
</dbReference>
<dbReference type="iPTMnet" id="A1Z9P3"/>
<dbReference type="PaxDb" id="7227-FBpp0111526"/>
<dbReference type="DNASU" id="36592"/>
<dbReference type="EnsemblMetazoa" id="FBtr0112614">
    <molecule id="A1Z9P3-3"/>
    <property type="protein sequence ID" value="FBpp0111526"/>
    <property type="gene ID" value="FBgn0085408"/>
</dbReference>
<dbReference type="EnsemblMetazoa" id="FBtr0112616">
    <molecule id="A1Z9P3-2"/>
    <property type="protein sequence ID" value="FBpp0111528"/>
    <property type="gene ID" value="FBgn0085408"/>
</dbReference>
<dbReference type="EnsemblMetazoa" id="FBtr0290253">
    <molecule id="A1Z9P3-1"/>
    <property type="protein sequence ID" value="FBpp0288692"/>
    <property type="gene ID" value="FBgn0085408"/>
</dbReference>
<dbReference type="EnsemblMetazoa" id="FBtr0339991">
    <molecule id="A1Z9P3-3"/>
    <property type="protein sequence ID" value="FBpp0309010"/>
    <property type="gene ID" value="FBgn0085408"/>
</dbReference>
<dbReference type="GeneID" id="36592"/>
<dbReference type="KEGG" id="dme:Dmel_CG34379"/>
<dbReference type="UCSC" id="CG34379-RD">
    <property type="organism name" value="d. melanogaster"/>
</dbReference>
<dbReference type="AGR" id="FB:FBgn0085408"/>
<dbReference type="CTD" id="36592"/>
<dbReference type="FlyBase" id="FBgn0085408">
    <property type="gene designation" value="Shrm"/>
</dbReference>
<dbReference type="VEuPathDB" id="VectorBase:FBgn0085408"/>
<dbReference type="eggNOG" id="ENOG502QUU2">
    <property type="taxonomic scope" value="Eukaryota"/>
</dbReference>
<dbReference type="GeneTree" id="ENSGT00940000167525"/>
<dbReference type="HOGENOM" id="CLU_242240_0_0_1"/>
<dbReference type="InParanoid" id="A1Z9P3"/>
<dbReference type="OMA" id="PIPLMAR"/>
<dbReference type="OrthoDB" id="10063560at2759"/>
<dbReference type="PhylomeDB" id="A1Z9P3"/>
<dbReference type="BioGRID-ORCS" id="36592">
    <property type="hits" value="0 hits in 3 CRISPR screens"/>
</dbReference>
<dbReference type="EvolutionaryTrace" id="A1Z9P3"/>
<dbReference type="GenomeRNAi" id="36592"/>
<dbReference type="PRO" id="PR:A1Z9P3"/>
<dbReference type="Proteomes" id="UP000000803">
    <property type="component" value="Chromosome 2R"/>
</dbReference>
<dbReference type="Bgee" id="FBgn0085408">
    <property type="expression patterns" value="Expressed in dorsal appendage forming follicle cell in ovary and 204 other cell types or tissues"/>
</dbReference>
<dbReference type="ExpressionAtlas" id="A1Z9P3">
    <property type="expression patterns" value="baseline and differential"/>
</dbReference>
<dbReference type="GO" id="GO:0005912">
    <property type="term" value="C:adherens junction"/>
    <property type="evidence" value="ECO:0000314"/>
    <property type="project" value="UniProtKB"/>
</dbReference>
<dbReference type="GO" id="GO:0043296">
    <property type="term" value="C:apical junction complex"/>
    <property type="evidence" value="ECO:0000318"/>
    <property type="project" value="GO_Central"/>
</dbReference>
<dbReference type="GO" id="GO:0016324">
    <property type="term" value="C:apical plasma membrane"/>
    <property type="evidence" value="ECO:0000314"/>
    <property type="project" value="UniProtKB"/>
</dbReference>
<dbReference type="GO" id="GO:0005923">
    <property type="term" value="C:bicellular tight junction"/>
    <property type="evidence" value="ECO:0000250"/>
    <property type="project" value="UniProtKB"/>
</dbReference>
<dbReference type="GO" id="GO:0005911">
    <property type="term" value="C:cell-cell junction"/>
    <property type="evidence" value="ECO:0000314"/>
    <property type="project" value="FlyBase"/>
</dbReference>
<dbReference type="GO" id="GO:0030864">
    <property type="term" value="C:cortical actin cytoskeleton"/>
    <property type="evidence" value="ECO:0000314"/>
    <property type="project" value="FlyBase"/>
</dbReference>
<dbReference type="GO" id="GO:0005856">
    <property type="term" value="C:cytoskeleton"/>
    <property type="evidence" value="ECO:0000250"/>
    <property type="project" value="UniProtKB"/>
</dbReference>
<dbReference type="GO" id="GO:0005874">
    <property type="term" value="C:microtubule"/>
    <property type="evidence" value="ECO:0007669"/>
    <property type="project" value="UniProtKB-KW"/>
</dbReference>
<dbReference type="GO" id="GO:0005886">
    <property type="term" value="C:plasma membrane"/>
    <property type="evidence" value="ECO:0000250"/>
    <property type="project" value="UniProtKB"/>
</dbReference>
<dbReference type="GO" id="GO:0003779">
    <property type="term" value="F:actin binding"/>
    <property type="evidence" value="ECO:0000250"/>
    <property type="project" value="UniProtKB"/>
</dbReference>
<dbReference type="GO" id="GO:0051015">
    <property type="term" value="F:actin filament binding"/>
    <property type="evidence" value="ECO:0000315"/>
    <property type="project" value="UniProtKB"/>
</dbReference>
<dbReference type="GO" id="GO:0019900">
    <property type="term" value="F:kinase binding"/>
    <property type="evidence" value="ECO:0000353"/>
    <property type="project" value="UniProtKB"/>
</dbReference>
<dbReference type="GO" id="GO:0042803">
    <property type="term" value="F:protein homodimerization activity"/>
    <property type="evidence" value="ECO:0000314"/>
    <property type="project" value="UniProtKB"/>
</dbReference>
<dbReference type="GO" id="GO:0030036">
    <property type="term" value="P:actin cytoskeleton organization"/>
    <property type="evidence" value="ECO:0000315"/>
    <property type="project" value="UniProtKB"/>
</dbReference>
<dbReference type="GO" id="GO:0007015">
    <property type="term" value="P:actin filament organization"/>
    <property type="evidence" value="ECO:0000318"/>
    <property type="project" value="GO_Central"/>
</dbReference>
<dbReference type="GO" id="GO:0031032">
    <property type="term" value="P:actomyosin structure organization"/>
    <property type="evidence" value="ECO:0000315"/>
    <property type="project" value="UniProtKB"/>
</dbReference>
<dbReference type="GO" id="GO:0003383">
    <property type="term" value="P:apical constriction"/>
    <property type="evidence" value="ECO:0000315"/>
    <property type="project" value="UniProtKB"/>
</dbReference>
<dbReference type="GO" id="GO:0016477">
    <property type="term" value="P:cell migration"/>
    <property type="evidence" value="ECO:0000250"/>
    <property type="project" value="UniProtKB"/>
</dbReference>
<dbReference type="GO" id="GO:0000902">
    <property type="term" value="P:cell morphogenesis"/>
    <property type="evidence" value="ECO:0000314"/>
    <property type="project" value="FlyBase"/>
</dbReference>
<dbReference type="GO" id="GO:0048598">
    <property type="term" value="P:embryonic morphogenesis"/>
    <property type="evidence" value="ECO:0000315"/>
    <property type="project" value="UniProtKB"/>
</dbReference>
<dbReference type="GO" id="GO:0042249">
    <property type="term" value="P:establishment of planar polarity of embryonic epithelium"/>
    <property type="evidence" value="ECO:0000315"/>
    <property type="project" value="FlyBase"/>
</dbReference>
<dbReference type="GO" id="GO:0030950">
    <property type="term" value="P:establishment or maintenance of actin cytoskeleton polarity"/>
    <property type="evidence" value="ECO:0000315"/>
    <property type="project" value="FlyBase"/>
</dbReference>
<dbReference type="GO" id="GO:0032438">
    <property type="term" value="P:melanosome organization"/>
    <property type="evidence" value="ECO:0000250"/>
    <property type="project" value="UniProtKB"/>
</dbReference>
<dbReference type="GO" id="GO:0090251">
    <property type="term" value="P:protein localization involved in establishment of planar polarity"/>
    <property type="evidence" value="ECO:0000315"/>
    <property type="project" value="FlyBase"/>
</dbReference>
<dbReference type="GO" id="GO:0071896">
    <property type="term" value="P:protein localization to adherens junction"/>
    <property type="evidence" value="ECO:0000315"/>
    <property type="project" value="FlyBase"/>
</dbReference>
<dbReference type="Gene3D" id="6.10.250.3120">
    <property type="match status" value="1"/>
</dbReference>
<dbReference type="InterPro" id="IPR014799">
    <property type="entry name" value="ASD2_dom"/>
</dbReference>
<dbReference type="InterPro" id="IPR027685">
    <property type="entry name" value="Shroom_fam"/>
</dbReference>
<dbReference type="PANTHER" id="PTHR15012">
    <property type="entry name" value="APICAL PROTEIN/SHROOM-RELATED"/>
    <property type="match status" value="1"/>
</dbReference>
<dbReference type="PANTHER" id="PTHR15012:SF32">
    <property type="entry name" value="PROTEIN SHROOM"/>
    <property type="match status" value="1"/>
</dbReference>
<dbReference type="Pfam" id="PF08687">
    <property type="entry name" value="ASD2"/>
    <property type="match status" value="1"/>
</dbReference>
<dbReference type="PROSITE" id="PS51307">
    <property type="entry name" value="ASD2"/>
    <property type="match status" value="1"/>
</dbReference>